<reference key="1">
    <citation type="submission" date="2005-10" db="EMBL/GenBank/DDBJ databases">
        <title>Complete sequence of chromosome 1 of Burkholderia sp. 383.</title>
        <authorList>
            <consortium name="US DOE Joint Genome Institute"/>
            <person name="Copeland A."/>
            <person name="Lucas S."/>
            <person name="Lapidus A."/>
            <person name="Barry K."/>
            <person name="Detter J.C."/>
            <person name="Glavina T."/>
            <person name="Hammon N."/>
            <person name="Israni S."/>
            <person name="Pitluck S."/>
            <person name="Chain P."/>
            <person name="Malfatti S."/>
            <person name="Shin M."/>
            <person name="Vergez L."/>
            <person name="Schmutz J."/>
            <person name="Larimer F."/>
            <person name="Land M."/>
            <person name="Kyrpides N."/>
            <person name="Lykidis A."/>
            <person name="Richardson P."/>
        </authorList>
    </citation>
    <scope>NUCLEOTIDE SEQUENCE [LARGE SCALE GENOMIC DNA]</scope>
    <source>
        <strain>ATCC 17760 / DSM 23089 / LMG 22485 / NCIMB 9086 / R18194 / 383</strain>
    </source>
</reference>
<comment type="function">
    <text evidence="1">Binds together with bS18 to 16S ribosomal RNA.</text>
</comment>
<comment type="similarity">
    <text evidence="1">Belongs to the bacterial ribosomal protein bS6 family.</text>
</comment>
<gene>
    <name evidence="1" type="primary">rpsF</name>
    <name type="ordered locus">Bcep18194_A5174</name>
</gene>
<name>RS6_BURL3</name>
<evidence type="ECO:0000255" key="1">
    <source>
        <dbReference type="HAMAP-Rule" id="MF_00360"/>
    </source>
</evidence>
<evidence type="ECO:0000256" key="2">
    <source>
        <dbReference type="SAM" id="MobiDB-lite"/>
    </source>
</evidence>
<evidence type="ECO:0000305" key="3"/>
<keyword id="KW-0687">Ribonucleoprotein</keyword>
<keyword id="KW-0689">Ribosomal protein</keyword>
<keyword id="KW-0694">RNA-binding</keyword>
<keyword id="KW-0699">rRNA-binding</keyword>
<accession>Q39FJ8</accession>
<proteinExistence type="inferred from homology"/>
<feature type="chain" id="PRO_0000229529" description="Small ribosomal subunit protein bS6">
    <location>
        <begin position="1"/>
        <end position="124"/>
    </location>
</feature>
<feature type="region of interest" description="Disordered" evidence="2">
    <location>
        <begin position="96"/>
        <end position="124"/>
    </location>
</feature>
<feature type="compositionally biased region" description="Low complexity" evidence="2">
    <location>
        <begin position="114"/>
        <end position="124"/>
    </location>
</feature>
<dbReference type="EMBL" id="CP000151">
    <property type="protein sequence ID" value="ABB08768.1"/>
    <property type="molecule type" value="Genomic_DNA"/>
</dbReference>
<dbReference type="RefSeq" id="WP_006402295.1">
    <property type="nucleotide sequence ID" value="NZ_WNDV01000021.1"/>
</dbReference>
<dbReference type="SMR" id="Q39FJ8"/>
<dbReference type="GeneID" id="98105606"/>
<dbReference type="KEGG" id="bur:Bcep18194_A5174"/>
<dbReference type="HOGENOM" id="CLU_113441_6_1_4"/>
<dbReference type="Proteomes" id="UP000002705">
    <property type="component" value="Chromosome 1"/>
</dbReference>
<dbReference type="GO" id="GO:0022627">
    <property type="term" value="C:cytosolic small ribosomal subunit"/>
    <property type="evidence" value="ECO:0007669"/>
    <property type="project" value="TreeGrafter"/>
</dbReference>
<dbReference type="GO" id="GO:0070181">
    <property type="term" value="F:small ribosomal subunit rRNA binding"/>
    <property type="evidence" value="ECO:0007669"/>
    <property type="project" value="TreeGrafter"/>
</dbReference>
<dbReference type="GO" id="GO:0003735">
    <property type="term" value="F:structural constituent of ribosome"/>
    <property type="evidence" value="ECO:0007669"/>
    <property type="project" value="InterPro"/>
</dbReference>
<dbReference type="GO" id="GO:0006412">
    <property type="term" value="P:translation"/>
    <property type="evidence" value="ECO:0007669"/>
    <property type="project" value="UniProtKB-UniRule"/>
</dbReference>
<dbReference type="CDD" id="cd00473">
    <property type="entry name" value="bS6"/>
    <property type="match status" value="1"/>
</dbReference>
<dbReference type="Gene3D" id="3.30.70.60">
    <property type="match status" value="1"/>
</dbReference>
<dbReference type="HAMAP" id="MF_00360">
    <property type="entry name" value="Ribosomal_bS6"/>
    <property type="match status" value="1"/>
</dbReference>
<dbReference type="InterPro" id="IPR000529">
    <property type="entry name" value="Ribosomal_bS6"/>
</dbReference>
<dbReference type="InterPro" id="IPR035980">
    <property type="entry name" value="Ribosomal_bS6_sf"/>
</dbReference>
<dbReference type="InterPro" id="IPR020814">
    <property type="entry name" value="Ribosomal_S6_plastid/chlpt"/>
</dbReference>
<dbReference type="InterPro" id="IPR014717">
    <property type="entry name" value="Transl_elong_EF1B/ribsomal_bS6"/>
</dbReference>
<dbReference type="NCBIfam" id="TIGR00166">
    <property type="entry name" value="S6"/>
    <property type="match status" value="1"/>
</dbReference>
<dbReference type="PANTHER" id="PTHR21011">
    <property type="entry name" value="MITOCHONDRIAL 28S RIBOSOMAL PROTEIN S6"/>
    <property type="match status" value="1"/>
</dbReference>
<dbReference type="PANTHER" id="PTHR21011:SF1">
    <property type="entry name" value="SMALL RIBOSOMAL SUBUNIT PROTEIN BS6M"/>
    <property type="match status" value="1"/>
</dbReference>
<dbReference type="Pfam" id="PF01250">
    <property type="entry name" value="Ribosomal_S6"/>
    <property type="match status" value="1"/>
</dbReference>
<dbReference type="SUPFAM" id="SSF54995">
    <property type="entry name" value="Ribosomal protein S6"/>
    <property type="match status" value="1"/>
</dbReference>
<protein>
    <recommendedName>
        <fullName evidence="1">Small ribosomal subunit protein bS6</fullName>
    </recommendedName>
    <alternativeName>
        <fullName evidence="3">30S ribosomal protein S6</fullName>
    </alternativeName>
</protein>
<organism>
    <name type="scientific">Burkholderia lata (strain ATCC 17760 / DSM 23089 / LMG 22485 / NCIMB 9086 / R18194 / 383)</name>
    <dbReference type="NCBI Taxonomy" id="482957"/>
    <lineage>
        <taxon>Bacteria</taxon>
        <taxon>Pseudomonadati</taxon>
        <taxon>Pseudomonadota</taxon>
        <taxon>Betaproteobacteria</taxon>
        <taxon>Burkholderiales</taxon>
        <taxon>Burkholderiaceae</taxon>
        <taxon>Burkholderia</taxon>
        <taxon>Burkholderia cepacia complex</taxon>
    </lineage>
</organism>
<sequence length="124" mass="14320">MRHYEIVFIVHPDQSEQVPAMIERYKTTITSHGGQIHRVEDWGRRQLAYMIEKLAKAHYVCMNIECDQTTLDELEHAFKFNDAVLRHLIVKMKKAETGPSPMMKEVQREEAKKAAAAQPTEAQA</sequence>